<proteinExistence type="inferred from homology"/>
<comment type="function">
    <text evidence="1">ATP-dependent specificity component of the Clp protease. It directs the protease to specific substrates. Can perform chaperone functions in the absence of ClpP.</text>
</comment>
<comment type="subunit">
    <text evidence="1">Component of the ClpX-ClpP complex. Forms a hexameric ring that, in the presence of ATP, binds to fourteen ClpP subunits assembled into a disk-like structure with a central cavity, resembling the structure of eukaryotic proteasomes.</text>
</comment>
<comment type="similarity">
    <text evidence="1">Belongs to the ClpX chaperone family.</text>
</comment>
<feature type="chain" id="PRO_1000097959" description="ATP-dependent Clp protease ATP-binding subunit ClpX">
    <location>
        <begin position="1"/>
        <end position="432"/>
    </location>
</feature>
<feature type="domain" description="ClpX-type ZB" evidence="2">
    <location>
        <begin position="1"/>
        <end position="55"/>
    </location>
</feature>
<feature type="region of interest" description="Disordered" evidence="3">
    <location>
        <begin position="412"/>
        <end position="432"/>
    </location>
</feature>
<feature type="binding site" evidence="2">
    <location>
        <position position="13"/>
    </location>
    <ligand>
        <name>Zn(2+)</name>
        <dbReference type="ChEBI" id="CHEBI:29105"/>
    </ligand>
</feature>
<feature type="binding site" evidence="2">
    <location>
        <position position="16"/>
    </location>
    <ligand>
        <name>Zn(2+)</name>
        <dbReference type="ChEBI" id="CHEBI:29105"/>
    </ligand>
</feature>
<feature type="binding site" evidence="2">
    <location>
        <position position="36"/>
    </location>
    <ligand>
        <name>Zn(2+)</name>
        <dbReference type="ChEBI" id="CHEBI:29105"/>
    </ligand>
</feature>
<feature type="binding site" evidence="2">
    <location>
        <position position="39"/>
    </location>
    <ligand>
        <name>Zn(2+)</name>
        <dbReference type="ChEBI" id="CHEBI:29105"/>
    </ligand>
</feature>
<feature type="binding site" evidence="1">
    <location>
        <begin position="122"/>
        <end position="129"/>
    </location>
    <ligand>
        <name>ATP</name>
        <dbReference type="ChEBI" id="CHEBI:30616"/>
    </ligand>
</feature>
<keyword id="KW-0067">ATP-binding</keyword>
<keyword id="KW-0143">Chaperone</keyword>
<keyword id="KW-0479">Metal-binding</keyword>
<keyword id="KW-0547">Nucleotide-binding</keyword>
<keyword id="KW-0862">Zinc</keyword>
<gene>
    <name evidence="1" type="primary">clpX</name>
    <name type="ordered locus">Haur_3829</name>
</gene>
<dbReference type="EMBL" id="CP000875">
    <property type="protein sequence ID" value="ABX06465.1"/>
    <property type="molecule type" value="Genomic_DNA"/>
</dbReference>
<dbReference type="SMR" id="A9B8B2"/>
<dbReference type="FunCoup" id="A9B8B2">
    <property type="interactions" value="404"/>
</dbReference>
<dbReference type="STRING" id="316274.Haur_3829"/>
<dbReference type="KEGG" id="hau:Haur_3829"/>
<dbReference type="eggNOG" id="COG1219">
    <property type="taxonomic scope" value="Bacteria"/>
</dbReference>
<dbReference type="HOGENOM" id="CLU_014218_8_2_0"/>
<dbReference type="InParanoid" id="A9B8B2"/>
<dbReference type="Proteomes" id="UP000000787">
    <property type="component" value="Chromosome"/>
</dbReference>
<dbReference type="GO" id="GO:0009376">
    <property type="term" value="C:HslUV protease complex"/>
    <property type="evidence" value="ECO:0007669"/>
    <property type="project" value="TreeGrafter"/>
</dbReference>
<dbReference type="GO" id="GO:0005524">
    <property type="term" value="F:ATP binding"/>
    <property type="evidence" value="ECO:0007669"/>
    <property type="project" value="UniProtKB-UniRule"/>
</dbReference>
<dbReference type="GO" id="GO:0016887">
    <property type="term" value="F:ATP hydrolysis activity"/>
    <property type="evidence" value="ECO:0007669"/>
    <property type="project" value="InterPro"/>
</dbReference>
<dbReference type="GO" id="GO:0140662">
    <property type="term" value="F:ATP-dependent protein folding chaperone"/>
    <property type="evidence" value="ECO:0007669"/>
    <property type="project" value="InterPro"/>
</dbReference>
<dbReference type="GO" id="GO:0046983">
    <property type="term" value="F:protein dimerization activity"/>
    <property type="evidence" value="ECO:0007669"/>
    <property type="project" value="InterPro"/>
</dbReference>
<dbReference type="GO" id="GO:0051082">
    <property type="term" value="F:unfolded protein binding"/>
    <property type="evidence" value="ECO:0007669"/>
    <property type="project" value="UniProtKB-UniRule"/>
</dbReference>
<dbReference type="GO" id="GO:0008270">
    <property type="term" value="F:zinc ion binding"/>
    <property type="evidence" value="ECO:0007669"/>
    <property type="project" value="InterPro"/>
</dbReference>
<dbReference type="GO" id="GO:0051301">
    <property type="term" value="P:cell division"/>
    <property type="evidence" value="ECO:0007669"/>
    <property type="project" value="TreeGrafter"/>
</dbReference>
<dbReference type="GO" id="GO:0051603">
    <property type="term" value="P:proteolysis involved in protein catabolic process"/>
    <property type="evidence" value="ECO:0007669"/>
    <property type="project" value="TreeGrafter"/>
</dbReference>
<dbReference type="CDD" id="cd19497">
    <property type="entry name" value="RecA-like_ClpX"/>
    <property type="match status" value="1"/>
</dbReference>
<dbReference type="FunFam" id="1.10.8.60:FF:000002">
    <property type="entry name" value="ATP-dependent Clp protease ATP-binding subunit ClpX"/>
    <property type="match status" value="1"/>
</dbReference>
<dbReference type="FunFam" id="3.40.50.300:FF:000005">
    <property type="entry name" value="ATP-dependent Clp protease ATP-binding subunit ClpX"/>
    <property type="match status" value="1"/>
</dbReference>
<dbReference type="Gene3D" id="1.10.8.60">
    <property type="match status" value="1"/>
</dbReference>
<dbReference type="Gene3D" id="6.20.220.10">
    <property type="entry name" value="ClpX chaperone, C4-type zinc finger domain"/>
    <property type="match status" value="1"/>
</dbReference>
<dbReference type="Gene3D" id="3.40.50.300">
    <property type="entry name" value="P-loop containing nucleotide triphosphate hydrolases"/>
    <property type="match status" value="1"/>
</dbReference>
<dbReference type="HAMAP" id="MF_00175">
    <property type="entry name" value="ClpX"/>
    <property type="match status" value="1"/>
</dbReference>
<dbReference type="InterPro" id="IPR003593">
    <property type="entry name" value="AAA+_ATPase"/>
</dbReference>
<dbReference type="InterPro" id="IPR050052">
    <property type="entry name" value="ATP-dep_Clp_protease_ClpX"/>
</dbReference>
<dbReference type="InterPro" id="IPR003959">
    <property type="entry name" value="ATPase_AAA_core"/>
</dbReference>
<dbReference type="InterPro" id="IPR019489">
    <property type="entry name" value="Clp_ATPase_C"/>
</dbReference>
<dbReference type="InterPro" id="IPR004487">
    <property type="entry name" value="Clp_protease_ATP-bd_su_ClpX"/>
</dbReference>
<dbReference type="InterPro" id="IPR046425">
    <property type="entry name" value="ClpX_bact"/>
</dbReference>
<dbReference type="InterPro" id="IPR027417">
    <property type="entry name" value="P-loop_NTPase"/>
</dbReference>
<dbReference type="InterPro" id="IPR010603">
    <property type="entry name" value="Znf_CppX_C4"/>
</dbReference>
<dbReference type="InterPro" id="IPR038366">
    <property type="entry name" value="Znf_CppX_C4_sf"/>
</dbReference>
<dbReference type="NCBIfam" id="TIGR00382">
    <property type="entry name" value="clpX"/>
    <property type="match status" value="1"/>
</dbReference>
<dbReference type="NCBIfam" id="NF003745">
    <property type="entry name" value="PRK05342.1"/>
    <property type="match status" value="1"/>
</dbReference>
<dbReference type="PANTHER" id="PTHR48102:SF7">
    <property type="entry name" value="ATP-DEPENDENT CLP PROTEASE ATP-BINDING SUBUNIT CLPX-LIKE, MITOCHONDRIAL"/>
    <property type="match status" value="1"/>
</dbReference>
<dbReference type="PANTHER" id="PTHR48102">
    <property type="entry name" value="ATP-DEPENDENT CLP PROTEASE ATP-BINDING SUBUNIT CLPX-LIKE, MITOCHONDRIAL-RELATED"/>
    <property type="match status" value="1"/>
</dbReference>
<dbReference type="Pfam" id="PF07724">
    <property type="entry name" value="AAA_2"/>
    <property type="match status" value="1"/>
</dbReference>
<dbReference type="Pfam" id="PF10431">
    <property type="entry name" value="ClpB_D2-small"/>
    <property type="match status" value="1"/>
</dbReference>
<dbReference type="Pfam" id="PF06689">
    <property type="entry name" value="zf-C4_ClpX"/>
    <property type="match status" value="1"/>
</dbReference>
<dbReference type="SMART" id="SM00382">
    <property type="entry name" value="AAA"/>
    <property type="match status" value="1"/>
</dbReference>
<dbReference type="SMART" id="SM01086">
    <property type="entry name" value="ClpB_D2-small"/>
    <property type="match status" value="1"/>
</dbReference>
<dbReference type="SMART" id="SM00994">
    <property type="entry name" value="zf-C4_ClpX"/>
    <property type="match status" value="1"/>
</dbReference>
<dbReference type="SUPFAM" id="SSF57716">
    <property type="entry name" value="Glucocorticoid receptor-like (DNA-binding domain)"/>
    <property type="match status" value="1"/>
</dbReference>
<dbReference type="SUPFAM" id="SSF52540">
    <property type="entry name" value="P-loop containing nucleoside triphosphate hydrolases"/>
    <property type="match status" value="1"/>
</dbReference>
<dbReference type="PROSITE" id="PS51902">
    <property type="entry name" value="CLPX_ZB"/>
    <property type="match status" value="1"/>
</dbReference>
<name>CLPX_HERA2</name>
<evidence type="ECO:0000255" key="1">
    <source>
        <dbReference type="HAMAP-Rule" id="MF_00175"/>
    </source>
</evidence>
<evidence type="ECO:0000255" key="2">
    <source>
        <dbReference type="PROSITE-ProRule" id="PRU01250"/>
    </source>
</evidence>
<evidence type="ECO:0000256" key="3">
    <source>
        <dbReference type="SAM" id="MobiDB-lite"/>
    </source>
</evidence>
<reference key="1">
    <citation type="journal article" date="2011" name="Stand. Genomic Sci.">
        <title>Complete genome sequence of the filamentous gliding predatory bacterium Herpetosiphon aurantiacus type strain (114-95(T)).</title>
        <authorList>
            <person name="Kiss H."/>
            <person name="Nett M."/>
            <person name="Domin N."/>
            <person name="Martin K."/>
            <person name="Maresca J.A."/>
            <person name="Copeland A."/>
            <person name="Lapidus A."/>
            <person name="Lucas S."/>
            <person name="Berry K.W."/>
            <person name="Glavina Del Rio T."/>
            <person name="Dalin E."/>
            <person name="Tice H."/>
            <person name="Pitluck S."/>
            <person name="Richardson P."/>
            <person name="Bruce D."/>
            <person name="Goodwin L."/>
            <person name="Han C."/>
            <person name="Detter J.C."/>
            <person name="Schmutz J."/>
            <person name="Brettin T."/>
            <person name="Land M."/>
            <person name="Hauser L."/>
            <person name="Kyrpides N.C."/>
            <person name="Ivanova N."/>
            <person name="Goeker M."/>
            <person name="Woyke T."/>
            <person name="Klenk H.P."/>
            <person name="Bryant D.A."/>
        </authorList>
    </citation>
    <scope>NUCLEOTIDE SEQUENCE [LARGE SCALE GENOMIC DNA]</scope>
    <source>
        <strain>ATCC 23779 / DSM 785 / 114-95</strain>
    </source>
</reference>
<protein>
    <recommendedName>
        <fullName evidence="1">ATP-dependent Clp protease ATP-binding subunit ClpX</fullName>
    </recommendedName>
</protein>
<organism>
    <name type="scientific">Herpetosiphon aurantiacus (strain ATCC 23779 / DSM 785 / 114-95)</name>
    <dbReference type="NCBI Taxonomy" id="316274"/>
    <lineage>
        <taxon>Bacteria</taxon>
        <taxon>Bacillati</taxon>
        <taxon>Chloroflexota</taxon>
        <taxon>Chloroflexia</taxon>
        <taxon>Herpetosiphonales</taxon>
        <taxon>Herpetosiphonaceae</taxon>
        <taxon>Herpetosiphon</taxon>
    </lineage>
</organism>
<accession>A9B8B2</accession>
<sequence>MAQSAFMPPTYYCSFCGRNQDEVDRLVTGPGALFICNECIELLSAIIANEERKEAPHAPILPPTLPIPHAIRDHLDEYVIGQDRAKKVMAVAVYNHYKRLRAQAQGDTDVEIQKSNILLVGPTGSGKTLLAQTLARMLDVPFAIADATALTEAGYVGEDVETILLRLIQAADGDVDRAQMGILYIDEIDKIARKADNPSITRDVSGEGVQQALLKILEGGVVNVPPMPGRKHPQQEFIPFDTTNVLFICGGAFEGLEHHIAERMGSGGTLGFGKTIVKEERLERSKKLLSLVNPDDLLHFGFIPEFIGRMPVVAALTPLDKDAMMRILTEPRNAIIKQYQKMLALDHVQLEVSGDAMEAIVERALAGKTGARGLRTAVEEILLDVMFDLPSETDVVRCVITAETVRDGAMPTLIRRTSSRSRAGKQPTTKAS</sequence>